<sequence length="238" mass="25075">MDRPAYRRVVVKLSGEYLAGSQPFGIDQPTIDRIAGDLAEARALGVEIAVVVGGGNIFRGVEVSSRGVSRPTGDTMGMLATVMNCLALEAALERRGQSARALSSFVMPEVCELFTRRAAHKYLAEDRIVLLAGGTGNPYFTTDTTAVLRAAEIGAQAVLKATNVDGVYSSDPKKDPSAKRFERLSHSQALEGGYKVMDATAFALARETALPIIVFSIAEPGSIGAILKGTGRGTIVAS</sequence>
<feature type="chain" id="PRO_0000323903" description="Uridylate kinase">
    <location>
        <begin position="1"/>
        <end position="238"/>
    </location>
</feature>
<feature type="binding site" evidence="1">
    <location>
        <begin position="12"/>
        <end position="15"/>
    </location>
    <ligand>
        <name>ATP</name>
        <dbReference type="ChEBI" id="CHEBI:30616"/>
    </ligand>
</feature>
<feature type="binding site" evidence="1">
    <location>
        <position position="54"/>
    </location>
    <ligand>
        <name>UMP</name>
        <dbReference type="ChEBI" id="CHEBI:57865"/>
    </ligand>
</feature>
<feature type="binding site" evidence="1">
    <location>
        <position position="55"/>
    </location>
    <ligand>
        <name>ATP</name>
        <dbReference type="ChEBI" id="CHEBI:30616"/>
    </ligand>
</feature>
<feature type="binding site" evidence="1">
    <location>
        <position position="59"/>
    </location>
    <ligand>
        <name>ATP</name>
        <dbReference type="ChEBI" id="CHEBI:30616"/>
    </ligand>
</feature>
<feature type="binding site" evidence="1">
    <location>
        <position position="74"/>
    </location>
    <ligand>
        <name>UMP</name>
        <dbReference type="ChEBI" id="CHEBI:57865"/>
    </ligand>
</feature>
<feature type="binding site" evidence="1">
    <location>
        <begin position="135"/>
        <end position="142"/>
    </location>
    <ligand>
        <name>UMP</name>
        <dbReference type="ChEBI" id="CHEBI:57865"/>
    </ligand>
</feature>
<feature type="binding site" evidence="1">
    <location>
        <position position="162"/>
    </location>
    <ligand>
        <name>ATP</name>
        <dbReference type="ChEBI" id="CHEBI:30616"/>
    </ligand>
</feature>
<feature type="binding site" evidence="1">
    <location>
        <position position="163"/>
    </location>
    <ligand>
        <name>ATP</name>
        <dbReference type="ChEBI" id="CHEBI:30616"/>
    </ligand>
</feature>
<feature type="binding site" evidence="1">
    <location>
        <position position="168"/>
    </location>
    <ligand>
        <name>ATP</name>
        <dbReference type="ChEBI" id="CHEBI:30616"/>
    </ligand>
</feature>
<feature type="binding site" evidence="1">
    <location>
        <position position="171"/>
    </location>
    <ligand>
        <name>ATP</name>
        <dbReference type="ChEBI" id="CHEBI:30616"/>
    </ligand>
</feature>
<evidence type="ECO:0000255" key="1">
    <source>
        <dbReference type="HAMAP-Rule" id="MF_01220"/>
    </source>
</evidence>
<gene>
    <name evidence="1" type="primary">pyrH</name>
    <name type="ordered locus">Nwi_1857</name>
</gene>
<reference key="1">
    <citation type="journal article" date="2006" name="Appl. Environ. Microbiol.">
        <title>Genome sequence of the chemolithoautotrophic nitrite-oxidizing bacterium Nitrobacter winogradskyi Nb-255.</title>
        <authorList>
            <person name="Starkenburg S.R."/>
            <person name="Chain P.S.G."/>
            <person name="Sayavedra-Soto L.A."/>
            <person name="Hauser L."/>
            <person name="Land M.L."/>
            <person name="Larimer F.W."/>
            <person name="Malfatti S.A."/>
            <person name="Klotz M.G."/>
            <person name="Bottomley P.J."/>
            <person name="Arp D.J."/>
            <person name="Hickey W.J."/>
        </authorList>
    </citation>
    <scope>NUCLEOTIDE SEQUENCE [LARGE SCALE GENOMIC DNA]</scope>
    <source>
        <strain>ATCC 25391 / DSM 10237 / CIP 104748 / NCIMB 11846 / Nb-255</strain>
    </source>
</reference>
<accession>Q3SRH4</accession>
<dbReference type="EC" id="2.7.4.22" evidence="1"/>
<dbReference type="EMBL" id="CP000115">
    <property type="protein sequence ID" value="ABA05117.1"/>
    <property type="molecule type" value="Genomic_DNA"/>
</dbReference>
<dbReference type="RefSeq" id="WP_011315113.1">
    <property type="nucleotide sequence ID" value="NC_007406.1"/>
</dbReference>
<dbReference type="SMR" id="Q3SRH4"/>
<dbReference type="STRING" id="323098.Nwi_1857"/>
<dbReference type="KEGG" id="nwi:Nwi_1857"/>
<dbReference type="eggNOG" id="COG0528">
    <property type="taxonomic scope" value="Bacteria"/>
</dbReference>
<dbReference type="HOGENOM" id="CLU_033861_0_0_5"/>
<dbReference type="OrthoDB" id="9807458at2"/>
<dbReference type="UniPathway" id="UPA00159">
    <property type="reaction ID" value="UER00275"/>
</dbReference>
<dbReference type="Proteomes" id="UP000002531">
    <property type="component" value="Chromosome"/>
</dbReference>
<dbReference type="GO" id="GO:0005829">
    <property type="term" value="C:cytosol"/>
    <property type="evidence" value="ECO:0007669"/>
    <property type="project" value="TreeGrafter"/>
</dbReference>
<dbReference type="GO" id="GO:0005524">
    <property type="term" value="F:ATP binding"/>
    <property type="evidence" value="ECO:0007669"/>
    <property type="project" value="UniProtKB-KW"/>
</dbReference>
<dbReference type="GO" id="GO:0033862">
    <property type="term" value="F:UMP kinase activity"/>
    <property type="evidence" value="ECO:0007669"/>
    <property type="project" value="UniProtKB-EC"/>
</dbReference>
<dbReference type="GO" id="GO:0044210">
    <property type="term" value="P:'de novo' CTP biosynthetic process"/>
    <property type="evidence" value="ECO:0007669"/>
    <property type="project" value="UniProtKB-UniRule"/>
</dbReference>
<dbReference type="GO" id="GO:0006225">
    <property type="term" value="P:UDP biosynthetic process"/>
    <property type="evidence" value="ECO:0007669"/>
    <property type="project" value="TreeGrafter"/>
</dbReference>
<dbReference type="CDD" id="cd04254">
    <property type="entry name" value="AAK_UMPK-PyrH-Ec"/>
    <property type="match status" value="1"/>
</dbReference>
<dbReference type="FunFam" id="3.40.1160.10:FF:000001">
    <property type="entry name" value="Uridylate kinase"/>
    <property type="match status" value="1"/>
</dbReference>
<dbReference type="Gene3D" id="3.40.1160.10">
    <property type="entry name" value="Acetylglutamate kinase-like"/>
    <property type="match status" value="1"/>
</dbReference>
<dbReference type="HAMAP" id="MF_01220_B">
    <property type="entry name" value="PyrH_B"/>
    <property type="match status" value="1"/>
</dbReference>
<dbReference type="InterPro" id="IPR036393">
    <property type="entry name" value="AceGlu_kinase-like_sf"/>
</dbReference>
<dbReference type="InterPro" id="IPR001048">
    <property type="entry name" value="Asp/Glu/Uridylate_kinase"/>
</dbReference>
<dbReference type="InterPro" id="IPR011817">
    <property type="entry name" value="Uridylate_kinase"/>
</dbReference>
<dbReference type="InterPro" id="IPR015963">
    <property type="entry name" value="Uridylate_kinase_bac"/>
</dbReference>
<dbReference type="NCBIfam" id="TIGR02075">
    <property type="entry name" value="pyrH_bact"/>
    <property type="match status" value="1"/>
</dbReference>
<dbReference type="PANTHER" id="PTHR42833">
    <property type="entry name" value="URIDYLATE KINASE"/>
    <property type="match status" value="1"/>
</dbReference>
<dbReference type="PANTHER" id="PTHR42833:SF4">
    <property type="entry name" value="URIDYLATE KINASE PUMPKIN, CHLOROPLASTIC"/>
    <property type="match status" value="1"/>
</dbReference>
<dbReference type="Pfam" id="PF00696">
    <property type="entry name" value="AA_kinase"/>
    <property type="match status" value="1"/>
</dbReference>
<dbReference type="PIRSF" id="PIRSF005650">
    <property type="entry name" value="Uridylate_kin"/>
    <property type="match status" value="1"/>
</dbReference>
<dbReference type="SUPFAM" id="SSF53633">
    <property type="entry name" value="Carbamate kinase-like"/>
    <property type="match status" value="1"/>
</dbReference>
<organism>
    <name type="scientific">Nitrobacter winogradskyi (strain ATCC 25391 / DSM 10237 / CIP 104748 / NCIMB 11846 / Nb-255)</name>
    <dbReference type="NCBI Taxonomy" id="323098"/>
    <lineage>
        <taxon>Bacteria</taxon>
        <taxon>Pseudomonadati</taxon>
        <taxon>Pseudomonadota</taxon>
        <taxon>Alphaproteobacteria</taxon>
        <taxon>Hyphomicrobiales</taxon>
        <taxon>Nitrobacteraceae</taxon>
        <taxon>Nitrobacter</taxon>
    </lineage>
</organism>
<proteinExistence type="inferred from homology"/>
<name>PYRH_NITWN</name>
<protein>
    <recommendedName>
        <fullName evidence="1">Uridylate kinase</fullName>
        <shortName evidence="1">UK</shortName>
        <ecNumber evidence="1">2.7.4.22</ecNumber>
    </recommendedName>
    <alternativeName>
        <fullName evidence="1">Uridine monophosphate kinase</fullName>
        <shortName evidence="1">UMP kinase</shortName>
        <shortName evidence="1">UMPK</shortName>
    </alternativeName>
</protein>
<keyword id="KW-0067">ATP-binding</keyword>
<keyword id="KW-0963">Cytoplasm</keyword>
<keyword id="KW-0418">Kinase</keyword>
<keyword id="KW-0547">Nucleotide-binding</keyword>
<keyword id="KW-0665">Pyrimidine biosynthesis</keyword>
<keyword id="KW-1185">Reference proteome</keyword>
<keyword id="KW-0808">Transferase</keyword>
<comment type="function">
    <text evidence="1">Catalyzes the reversible phosphorylation of UMP to UDP.</text>
</comment>
<comment type="catalytic activity">
    <reaction evidence="1">
        <text>UMP + ATP = UDP + ADP</text>
        <dbReference type="Rhea" id="RHEA:24400"/>
        <dbReference type="ChEBI" id="CHEBI:30616"/>
        <dbReference type="ChEBI" id="CHEBI:57865"/>
        <dbReference type="ChEBI" id="CHEBI:58223"/>
        <dbReference type="ChEBI" id="CHEBI:456216"/>
        <dbReference type="EC" id="2.7.4.22"/>
    </reaction>
</comment>
<comment type="activity regulation">
    <text evidence="1">Inhibited by UTP.</text>
</comment>
<comment type="pathway">
    <text evidence="1">Pyrimidine metabolism; CTP biosynthesis via de novo pathway; UDP from UMP (UMPK route): step 1/1.</text>
</comment>
<comment type="subunit">
    <text evidence="1">Homohexamer.</text>
</comment>
<comment type="subcellular location">
    <subcellularLocation>
        <location evidence="1">Cytoplasm</location>
    </subcellularLocation>
</comment>
<comment type="similarity">
    <text evidence="1">Belongs to the UMP kinase family.</text>
</comment>